<evidence type="ECO:0000250" key="1">
    <source>
        <dbReference type="UniProtKB" id="P19812"/>
    </source>
</evidence>
<evidence type="ECO:0000250" key="2">
    <source>
        <dbReference type="UniProtKB" id="Q8IWV8"/>
    </source>
</evidence>
<evidence type="ECO:0000255" key="3">
    <source>
        <dbReference type="PROSITE-ProRule" id="PRU00508"/>
    </source>
</evidence>
<evidence type="ECO:0000256" key="4">
    <source>
        <dbReference type="SAM" id="MobiDB-lite"/>
    </source>
</evidence>
<evidence type="ECO:0000269" key="5">
    <source>
    </source>
</evidence>
<evidence type="ECO:0000269" key="6">
    <source>
    </source>
</evidence>
<evidence type="ECO:0000269" key="7">
    <source>
    </source>
</evidence>
<evidence type="ECO:0000269" key="8">
    <source>
    </source>
</evidence>
<evidence type="ECO:0000269" key="9">
    <source>
    </source>
</evidence>
<evidence type="ECO:0000269" key="10">
    <source>
    </source>
</evidence>
<evidence type="ECO:0000269" key="11">
    <source>
    </source>
</evidence>
<evidence type="ECO:0000269" key="12">
    <source>
    </source>
</evidence>
<evidence type="ECO:0000269" key="13">
    <source>
    </source>
</evidence>
<evidence type="ECO:0000269" key="14">
    <source>
    </source>
</evidence>
<evidence type="ECO:0000269" key="15">
    <source>
    </source>
</evidence>
<evidence type="ECO:0000269" key="16">
    <source>
    </source>
</evidence>
<evidence type="ECO:0000303" key="17">
    <source>
    </source>
</evidence>
<evidence type="ECO:0000303" key="18">
    <source>
    </source>
</evidence>
<evidence type="ECO:0000303" key="19">
    <source>
    </source>
</evidence>
<evidence type="ECO:0000305" key="20"/>
<evidence type="ECO:0000312" key="21">
    <source>
        <dbReference type="HGNC" id="HGNC:16808"/>
    </source>
</evidence>
<evidence type="ECO:0007744" key="22">
    <source>
        <dbReference type="PDB" id="3NY1"/>
    </source>
</evidence>
<evidence type="ECO:0007744" key="23">
    <source>
        <dbReference type="PDB" id="5TDC"/>
    </source>
</evidence>
<evidence type="ECO:0007744" key="24">
    <source>
    </source>
</evidence>
<evidence type="ECO:0007744" key="25">
    <source>
    </source>
</evidence>
<evidence type="ECO:0007744" key="26">
    <source>
    </source>
</evidence>
<evidence type="ECO:0007744" key="27">
    <source>
    </source>
</evidence>
<evidence type="ECO:0007744" key="28">
    <source>
    </source>
</evidence>
<evidence type="ECO:0007744" key="29">
    <source>
    </source>
</evidence>
<evidence type="ECO:0007829" key="30">
    <source>
        <dbReference type="PDB" id="5TDC"/>
    </source>
</evidence>
<feature type="initiator methionine" description="Removed" evidence="26">
    <location>
        <position position="1"/>
    </location>
</feature>
<feature type="chain" id="PRO_0000056136" description="E3 ubiquitin-protein ligase UBR1">
    <location>
        <begin position="2"/>
        <end position="1749"/>
    </location>
</feature>
<feature type="zinc finger region" description="UBR-type" evidence="3">
    <location>
        <begin position="97"/>
        <end position="168"/>
    </location>
</feature>
<feature type="zinc finger region" description="RING-type; atypical">
    <location>
        <begin position="1098"/>
        <end position="1201"/>
    </location>
</feature>
<feature type="region of interest" description="Disordered" evidence="4">
    <location>
        <begin position="842"/>
        <end position="868"/>
    </location>
</feature>
<feature type="region of interest" description="UBC2-binding region (U2BR)" evidence="1">
    <location>
        <begin position="1019"/>
        <end position="1054"/>
    </location>
</feature>
<feature type="binding site" evidence="10 15 22 23">
    <location>
        <position position="99"/>
    </location>
    <ligand>
        <name>Zn(2+)</name>
        <dbReference type="ChEBI" id="CHEBI:29105"/>
        <label>1</label>
    </ligand>
</feature>
<feature type="binding site" evidence="1">
    <location>
        <position position="99"/>
    </location>
    <ligand>
        <name>Zn(2+)</name>
        <dbReference type="ChEBI" id="CHEBI:29105"/>
        <label>2</label>
    </ligand>
</feature>
<feature type="binding site" evidence="10 15 22 23">
    <location>
        <position position="112"/>
    </location>
    <ligand>
        <name>Zn(2+)</name>
        <dbReference type="ChEBI" id="CHEBI:29105"/>
        <label>2</label>
    </ligand>
</feature>
<feature type="binding site" evidence="1">
    <location>
        <position position="112"/>
    </location>
    <ligand>
        <name>Zn(2+)</name>
        <dbReference type="ChEBI" id="CHEBI:29105"/>
        <label>3</label>
    </ligand>
</feature>
<feature type="binding site" evidence="10 15 22 23">
    <location>
        <position position="115"/>
    </location>
    <ligand>
        <name>Zn(2+)</name>
        <dbReference type="ChEBI" id="CHEBI:29105"/>
        <label>2</label>
    </ligand>
</feature>
<feature type="binding site" evidence="1">
    <location>
        <position position="115"/>
    </location>
    <ligand>
        <name>Zn(2+)</name>
        <dbReference type="ChEBI" id="CHEBI:29105"/>
        <label>3</label>
    </ligand>
</feature>
<feature type="binding site" evidence="10 15 22 23">
    <location>
        <position position="124"/>
    </location>
    <ligand>
        <name>Zn(2+)</name>
        <dbReference type="ChEBI" id="CHEBI:29105"/>
        <label>1</label>
    </ligand>
</feature>
<feature type="binding site" evidence="1">
    <location>
        <position position="124"/>
    </location>
    <ligand>
        <name>Zn(2+)</name>
        <dbReference type="ChEBI" id="CHEBI:29105"/>
        <label>2</label>
    </ligand>
</feature>
<feature type="binding site" evidence="10 15 22 23">
    <location>
        <position position="127"/>
    </location>
    <ligand>
        <name>Zn(2+)</name>
        <dbReference type="ChEBI" id="CHEBI:29105"/>
        <label>1</label>
    </ligand>
</feature>
<feature type="binding site" evidence="1">
    <location>
        <position position="127"/>
    </location>
    <ligand>
        <name>Zn(2+)</name>
        <dbReference type="ChEBI" id="CHEBI:29105"/>
        <label>2</label>
    </ligand>
</feature>
<feature type="binding site" evidence="10 15 22 23">
    <location>
        <position position="127"/>
    </location>
    <ligand>
        <name>Zn(2+)</name>
        <dbReference type="ChEBI" id="CHEBI:29105"/>
        <label>3</label>
    </ligand>
</feature>
<feature type="binding site" evidence="10 15 22 23">
    <location>
        <position position="133"/>
    </location>
    <ligand>
        <name>Zn(2+)</name>
        <dbReference type="ChEBI" id="CHEBI:29105"/>
        <label>2</label>
    </ligand>
</feature>
<feature type="binding site" evidence="1">
    <location>
        <position position="133"/>
    </location>
    <ligand>
        <name>Zn(2+)</name>
        <dbReference type="ChEBI" id="CHEBI:29105"/>
        <label>3</label>
    </ligand>
</feature>
<feature type="binding site" evidence="10 15 22 23">
    <location>
        <position position="136"/>
    </location>
    <ligand>
        <name>Zn(2+)</name>
        <dbReference type="ChEBI" id="CHEBI:29105"/>
        <label>2</label>
    </ligand>
</feature>
<feature type="binding site" evidence="1">
    <location>
        <position position="136"/>
    </location>
    <ligand>
        <name>Zn(2+)</name>
        <dbReference type="ChEBI" id="CHEBI:29105"/>
        <label>3</label>
    </ligand>
</feature>
<feature type="binding site" evidence="2">
    <location>
        <position position="148"/>
    </location>
    <ligand>
        <name>a peptide</name>
        <dbReference type="ChEBI" id="CHEBI:60466"/>
    </ligand>
    <ligandPart>
        <name>L-arginine residue</name>
        <dbReference type="ChEBI" id="CHEBI:29965"/>
    </ligandPart>
</feature>
<feature type="binding site" evidence="10 15 22 23">
    <location>
        <position position="149"/>
    </location>
    <ligand>
        <name>Zn(2+)</name>
        <dbReference type="ChEBI" id="CHEBI:29105"/>
        <label>1</label>
    </ligand>
</feature>
<feature type="binding site" evidence="1">
    <location>
        <position position="149"/>
    </location>
    <ligand>
        <name>Zn(2+)</name>
        <dbReference type="ChEBI" id="CHEBI:29105"/>
        <label>2</label>
    </ligand>
</feature>
<feature type="binding site" evidence="2">
    <location>
        <position position="150"/>
    </location>
    <ligand>
        <name>a peptide</name>
        <dbReference type="ChEBI" id="CHEBI:60466"/>
    </ligand>
    <ligandPart>
        <name>L-arginine residue</name>
        <dbReference type="ChEBI" id="CHEBI:29965"/>
    </ligandPart>
</feature>
<feature type="binding site" evidence="1">
    <location>
        <position position="151"/>
    </location>
    <ligand>
        <name>Zn(2+)</name>
        <dbReference type="ChEBI" id="CHEBI:29105"/>
        <label>1</label>
    </ligand>
</feature>
<feature type="binding site" evidence="10 15 22 23">
    <location>
        <position position="151"/>
    </location>
    <ligand>
        <name>Zn(2+)</name>
        <dbReference type="ChEBI" id="CHEBI:29105"/>
        <label>3</label>
    </ligand>
</feature>
<feature type="binding site" evidence="2">
    <location>
        <position position="153"/>
    </location>
    <ligand>
        <name>a peptide</name>
        <dbReference type="ChEBI" id="CHEBI:60466"/>
    </ligand>
    <ligandPart>
        <name>L-arginine residue</name>
        <dbReference type="ChEBI" id="CHEBI:29965"/>
    </ligandPart>
</feature>
<feature type="binding site" evidence="1">
    <location>
        <position position="163"/>
    </location>
    <ligand>
        <name>Zn(2+)</name>
        <dbReference type="ChEBI" id="CHEBI:29105"/>
        <label>1</label>
    </ligand>
</feature>
<feature type="binding site" evidence="10 15 22 23">
    <location>
        <position position="163"/>
    </location>
    <ligand>
        <name>Zn(2+)</name>
        <dbReference type="ChEBI" id="CHEBI:29105"/>
        <label>3</label>
    </ligand>
</feature>
<feature type="binding site" evidence="10 15 22 23">
    <location>
        <position position="166"/>
    </location>
    <ligand>
        <name>Zn(2+)</name>
        <dbReference type="ChEBI" id="CHEBI:29105"/>
        <label>3</label>
    </ligand>
</feature>
<feature type="binding site" evidence="1">
    <location>
        <position position="1098"/>
    </location>
    <ligand>
        <name>Zn(2+)</name>
        <dbReference type="ChEBI" id="CHEBI:29105"/>
        <label>4</label>
    </ligand>
</feature>
<feature type="binding site" evidence="1">
    <location>
        <position position="1101"/>
    </location>
    <ligand>
        <name>Zn(2+)</name>
        <dbReference type="ChEBI" id="CHEBI:29105"/>
        <label>4</label>
    </ligand>
</feature>
<feature type="binding site" evidence="1">
    <location>
        <position position="1159"/>
    </location>
    <ligand>
        <name>Zn(2+)</name>
        <dbReference type="ChEBI" id="CHEBI:29105"/>
        <label>5</label>
    </ligand>
</feature>
<feature type="binding site" evidence="1">
    <location>
        <position position="1161"/>
    </location>
    <ligand>
        <name>Zn(2+)</name>
        <dbReference type="ChEBI" id="CHEBI:29105"/>
        <label>5</label>
    </ligand>
</feature>
<feature type="binding site" evidence="1">
    <location>
        <position position="1164"/>
    </location>
    <ligand>
        <name>Zn(2+)</name>
        <dbReference type="ChEBI" id="CHEBI:29105"/>
        <label>4</label>
    </ligand>
</feature>
<feature type="binding site" evidence="1">
    <location>
        <position position="1167"/>
    </location>
    <ligand>
        <name>Zn(2+)</name>
        <dbReference type="ChEBI" id="CHEBI:29105"/>
        <label>4</label>
    </ligand>
</feature>
<feature type="binding site" evidence="1">
    <location>
        <position position="1197"/>
    </location>
    <ligand>
        <name>Zn(2+)</name>
        <dbReference type="ChEBI" id="CHEBI:29105"/>
        <label>5</label>
    </ligand>
</feature>
<feature type="binding site" evidence="1">
    <location>
        <position position="1200"/>
    </location>
    <ligand>
        <name>Zn(2+)</name>
        <dbReference type="ChEBI" id="CHEBI:29105"/>
        <label>5</label>
    </ligand>
</feature>
<feature type="binding site" evidence="1">
    <location>
        <position position="1627"/>
    </location>
    <ligand>
        <name>Zn(2+)</name>
        <dbReference type="ChEBI" id="CHEBI:29105"/>
        <label>6</label>
    </ligand>
</feature>
<feature type="binding site" evidence="1">
    <location>
        <position position="1630"/>
    </location>
    <ligand>
        <name>Zn(2+)</name>
        <dbReference type="ChEBI" id="CHEBI:29105"/>
        <label>6</label>
    </ligand>
</feature>
<feature type="binding site" evidence="1">
    <location>
        <position position="1653"/>
    </location>
    <ligand>
        <name>Zn(2+)</name>
        <dbReference type="ChEBI" id="CHEBI:29105"/>
        <label>6</label>
    </ligand>
</feature>
<feature type="modified residue" description="N-acetylalanine" evidence="26">
    <location>
        <position position="2"/>
    </location>
</feature>
<feature type="modified residue" description="Phosphothreonine" evidence="25 26 27 28 29">
    <location>
        <position position="21"/>
    </location>
</feature>
<feature type="modified residue" description="Phosphoserine" evidence="24">
    <location>
        <position position="1179"/>
    </location>
</feature>
<feature type="splice variant" id="VSP_015164" description="In isoform 2." evidence="19">
    <original>NNETGLENV</original>
    <variation>TRCIRPWSL</variation>
    <location>
        <begin position="795"/>
        <end position="803"/>
    </location>
</feature>
<feature type="splice variant" id="VSP_015165" description="In isoform 2." evidence="19">
    <location>
        <begin position="804"/>
        <end position="1749"/>
    </location>
</feature>
<feature type="sequence variant" id="VAR_075179" description="In JBS; decreased, but detectable activity in a yeast-based assay; changes the specificity for N-degrons; 2.6-fold decrease in affinity for N-degron peptide RLFS." evidence="10 11 13 15">
    <original>V</original>
    <variation>L</variation>
    <location>
        <position position="122"/>
    </location>
</feature>
<feature type="sequence variant" id="VAR_075180" description="In JBS." evidence="13">
    <original>C</original>
    <variation>F</variation>
    <location>
        <position position="127"/>
    </location>
</feature>
<feature type="sequence variant" id="VAR_024741" description="In JBS; prevents proper folding of the UBR-type zinc finger; may decrease protein stability; loss of activity in a yeast-based assay; dbSNP:rs119477054." evidence="7 10 11 13">
    <original>H</original>
    <variation>R</variation>
    <location>
        <position position="136"/>
    </location>
</feature>
<feature type="sequence variant" id="VAR_075181" description="In JBS." evidence="13">
    <original>H</original>
    <variation>R</variation>
    <location>
        <position position="166"/>
    </location>
</feature>
<feature type="sequence variant" id="VAR_075182" description="In JBS; dbSNP:rs2033815615." evidence="13">
    <original>L</original>
    <variation>R</variation>
    <location>
        <position position="217"/>
    </location>
</feature>
<feature type="sequence variant" id="VAR_075183" description="In JBS." evidence="13">
    <original>I</original>
    <variation>R</variation>
    <location>
        <position position="286"/>
    </location>
</feature>
<feature type="sequence variant" id="VAR_075184" description="In JBS." evidence="13">
    <original>L</original>
    <variation>P</variation>
    <location>
        <position position="317"/>
    </location>
</feature>
<feature type="sequence variant" id="VAR_075185" description="In JBS." evidence="13">
    <location>
        <begin position="389"/>
        <end position="392"/>
    </location>
</feature>
<feature type="sequence variant" id="VAR_075186" description="In JBS; uncertain significance; dbSNP:rs1158249054." evidence="14">
    <original>L</original>
    <variation>R</variation>
    <location>
        <position position="427"/>
    </location>
</feature>
<feature type="sequence variant" id="VAR_075187" description="In JBS; dbSNP:rs768686147." evidence="13">
    <original>A</original>
    <variation>D</variation>
    <location>
        <position position="563"/>
    </location>
</feature>
<feature type="sequence variant" id="VAR_034467" description="In dbSNP:rs34568456.">
    <original>K</original>
    <variation>M</variation>
    <location>
        <position position="596"/>
    </location>
</feature>
<feature type="sequence variant" id="VAR_075188" description="In JBS." evidence="13">
    <location>
        <position position="660"/>
    </location>
</feature>
<feature type="sequence variant" id="VAR_075189" description="In JBS." evidence="12 13">
    <original>S</original>
    <variation>P</variation>
    <location>
        <position position="700"/>
    </location>
</feature>
<feature type="sequence variant" id="VAR_075190" description="In JBS; dbSNP:rs1388367359." evidence="13">
    <original>R</original>
    <variation>C</variation>
    <location>
        <position position="754"/>
    </location>
</feature>
<feature type="sequence variant" id="VAR_075191" description="In JBS; dbSNP:rs1567131023." evidence="13">
    <original>R</original>
    <variation>H</variation>
    <location>
        <position position="754"/>
    </location>
</feature>
<feature type="sequence variant" id="VAR_052116" description="In dbSNP:rs35069201.">
    <original>I</original>
    <variation>V</variation>
    <location>
        <position position="899"/>
    </location>
</feature>
<feature type="sequence variant" id="VAR_075192" description="In JBS; strong decrease in activity in a yeast-based assay." evidence="11 13">
    <original>Q</original>
    <variation>E</variation>
    <location>
        <position position="1102"/>
    </location>
</feature>
<feature type="sequence variant" id="VAR_075193" description="In JBS; dbSNP:rs1235541565." evidence="13">
    <original>R</original>
    <variation>G</variation>
    <location>
        <position position="1242"/>
    </location>
</feature>
<feature type="sequence variant" id="VAR_024742" description="In JBS." evidence="7 13">
    <original>G</original>
    <variation>S</variation>
    <location>
        <position position="1279"/>
    </location>
</feature>
<feature type="sequence variant" id="VAR_075194" description="In JBS." evidence="13">
    <original>P</original>
    <variation>L</variation>
    <location>
        <position position="1426"/>
    </location>
</feature>
<feature type="sequence variant" id="VAR_075195" description="In JBS; dbSNP:rs1480939799." evidence="13">
    <original>S</original>
    <variation>F</variation>
    <location>
        <position position="1427"/>
    </location>
</feature>
<feature type="sequence variant" id="VAR_075196" description="In JBS; dbSNP:rs140972409." evidence="13">
    <original>S</original>
    <variation>P</variation>
    <location>
        <position position="1431"/>
    </location>
</feature>
<feature type="sequence variant" id="VAR_061822" description="In dbSNP:rs3917223.">
    <original>T</original>
    <variation>A</variation>
    <location>
        <position position="1548"/>
    </location>
</feature>
<feature type="sequence variant" id="VAR_075197" description="In JBS." evidence="13">
    <original>G</original>
    <variation>R</variation>
    <location>
        <position position="1661"/>
    </location>
</feature>
<feature type="sequence conflict" description="In Ref. 6; AAC39845." evidence="20" ref="6">
    <original>D</original>
    <variation>N</variation>
    <location>
        <position position="900"/>
    </location>
</feature>
<feature type="sequence conflict" description="In Ref. 3; AAO14997." evidence="20" ref="3">
    <original>D</original>
    <variation>T</variation>
    <location>
        <position position="973"/>
    </location>
</feature>
<feature type="sequence conflict" description="In Ref. 6; AAC23677." evidence="20" ref="6">
    <original>C</original>
    <variation>S</variation>
    <location>
        <position position="993"/>
    </location>
</feature>
<feature type="sequence conflict" description="In Ref. 3; AAO14997." evidence="20" ref="3">
    <original>LSRERYRKLH</original>
    <variation>FLVSGTEAP</variation>
    <location>
        <begin position="1710"/>
        <end position="1719"/>
    </location>
</feature>
<feature type="sequence conflict" description="In Ref. 3; AAO14997." evidence="20" ref="3">
    <original>W</original>
    <variation>R</variation>
    <location>
        <position position="1722"/>
    </location>
</feature>
<feature type="strand" evidence="30">
    <location>
        <begin position="108"/>
        <end position="112"/>
    </location>
</feature>
<feature type="turn" evidence="30">
    <location>
        <begin position="113"/>
        <end position="115"/>
    </location>
</feature>
<feature type="strand" evidence="30">
    <location>
        <begin position="116"/>
        <end position="118"/>
    </location>
</feature>
<feature type="helix" evidence="30">
    <location>
        <begin position="125"/>
        <end position="129"/>
    </location>
</feature>
<feature type="helix" evidence="30">
    <location>
        <begin position="132"/>
        <end position="135"/>
    </location>
</feature>
<feature type="strand" evidence="30">
    <location>
        <begin position="138"/>
        <end position="142"/>
    </location>
</feature>
<feature type="turn" evidence="30">
    <location>
        <begin position="154"/>
        <end position="156"/>
    </location>
</feature>
<feature type="strand" evidence="30">
    <location>
        <begin position="157"/>
        <end position="159"/>
    </location>
</feature>
<feature type="turn" evidence="30">
    <location>
        <begin position="164"/>
        <end position="166"/>
    </location>
</feature>
<sequence length="1749" mass="200211">MADEEAGGTERMEISAELPQTPQRLASWWDQQVDFYTAFLHHLAQLVPEIYFAEMDPDLEKQEESVQMSIFTPLEWYLFGEDPDICLEKLKHSGAFQLCGRVFKSGETTYSCRDCAIDPTCVLCMDCFQDSVHKNHRYKMHTSTGGGFCDCGDTEAWKTGPFCVNHEPGRAGTIKENSRCPLNEEVIVQARKIFPSVIKYVVEMTIWEEEKELPPELQIREKNERYYCVLFNDEHHSYDHVIYSLQRALDCELAEAQLHTTAIDKEGRRAVKAGAYAACQEAKEDIKSHSENVSQHPLHVEVLHSEIMAHQKFALRLGSWMNKIMSYSSDFRQIFCQACLREEPDSENPCLISRLMLWDAKLYKGARKILHELIFSSFFMEMEYKKLFAMEFVKYYKQLQKEYISDDHDRSISITALSVQMFTVPTLARHLIEEQNVISVITETLLEVLPEYLDRNNKFNFQGYSQDKLGRVYAVICDLKYILISKPTIWTERLRMQFLEGFRSFLKILTCMQGMEEIRRQVGQHIEVDPDWEAAIAIQMQLKNILLMFQEWCACDEELLLVAYKECHKAVMRCSTSFISSSKTVVQSCGHSLETKSYRVSEDLVSIHLPLSRTLAGLHVRLSRLGAVSRLHEFVSFEDFQVEVLVEYPLRCLVLVAQVVAEMWRRNGLSLISQVFYYQDVKCREEMYDKDIIMLQIGASLMDPNKFLLLVLQRYELAEAFNKTISTKDQDLIKQYNTLIEEMLQVLIYIVGERYVPGVGNVTKEEVTMREIIHLLCIEPMPHSAIAKNLPENENNETGLENVINKVATFKKPGVSGHGVYELKDESLKDFNMYFYHYSKTQHSKAEHMQKKRRKQENKDEALPPPPPPEFCPAFSKVINLLNCDIMMYILRTVFERAIDTDSNLWTEGMLQMAFHILALGLLEEKQQLQKAPEEEVTFDFYHKASRLGSSAMNIQMLLEKLKGIPQLEGQKDMITWILQMFDTVKRLREKSCLIVATTSGSESIKNDEITHDKEKAERKRKAEAARLHRQKIMAQMSALQKNFIETHKLMYDNTSEMPGKEDSIMEEESTPAVSDYSRIALGPKRGPSVTEKEVLTCILCQEEQEVKIENNAMVLSACVQKSTALTQHRGKPIELSGEALDPLFMDPDLAYGTYTGSCGHVMHAVCWQKYFEAVQLSSQQRIHVDLFDLESGEYLCPLCKSLCNTVIPIIPLQPQKINSENADALAQLLTLARWIQTVLARISGYNIRHAKGENPIPIFFNQGMGDSTLEFHSILSFGVESSIKYSNSIKEMVILFATTIYRIGLKVPPDERDPRVPMLTWSTCAFTIQAIENLLGDEGKPLFGALQNRQHNGLKALMQFAVAQRITCPQVLIQKHLVRLLSVVLPNIKSEDTPCLLSIDLFHVLVGAVLAFPSLYWDDPVDLQPSSVSSSYNHLYLFHLITMAHMLQILLTVDTGLPLAQVQEDSEEAHSASSFFAEISQYTSGSIGCDIPGWYLWVSLKNGITPYLRCAALFFHYLLGVTPPEELHTNSAEGEYSALCSYLSLPTNLFLLFQEYWDTVRPLLQRWCADPALLNCLKQKNTVVRYPRKRNSLIELPDDYSCLLNQASHFRCPRSADDERKHPVLCLFCGAILCSQNICCQEIVNGEEVGACIFHALHCGAGVCIFLKIRECRVVLVEGKARGCAYPAPYLDEYGETDPGLKRGNPLHLSRERYRKLHLVWQQHCIIEEIARSQETNQMLFGFNWQLL</sequence>
<accession>Q8IWV7</accession>
<accession>O60708</accession>
<accession>O75492</accession>
<accession>Q14D45</accession>
<accession>Q68DN9</accession>
<accession>Q8IWY6</accession>
<accession>Q96JY4</accession>
<reference key="1">
    <citation type="journal article" date="2004" name="Cancer Res.">
        <title>Regulation of protein catabolism by muscle-specific and cytokine-inducible ubiquitin ligase E3alpha-II during cancer cachexia.</title>
        <authorList>
            <person name="Kwak K.S."/>
            <person name="Zhou X."/>
            <person name="Solomon V."/>
            <person name="Baracos V.E."/>
            <person name="Davis J."/>
            <person name="Bannon A.W."/>
            <person name="Boyle W.J."/>
            <person name="Lacey D.L."/>
            <person name="Han H.Q."/>
        </authorList>
    </citation>
    <scope>NUCLEOTIDE SEQUENCE [MRNA] (ISOFORM 1)</scope>
    <scope>TISSUE SPECIFICITY</scope>
    <scope>FUNCTION</scope>
</reference>
<reference key="2">
    <citation type="journal article" date="2004" name="Genome Res.">
        <title>The status, quality, and expansion of the NIH full-length cDNA project: the Mammalian Gene Collection (MGC).</title>
        <authorList>
            <consortium name="The MGC Project Team"/>
        </authorList>
    </citation>
    <scope>NUCLEOTIDE SEQUENCE [LARGE SCALE MRNA] (ISOFORM 1)</scope>
    <source>
        <tissue>Brain</tissue>
    </source>
</reference>
<reference key="3">
    <citation type="journal article" date="2002" name="Am. J. Hum. Genet.">
        <title>Congenital dyserythropoietic anemia type I is caused by mutations in codanin-1.</title>
        <authorList>
            <person name="Dgany O."/>
            <person name="Avidan N."/>
            <person name="Delaunay J."/>
            <person name="Krasnov T."/>
            <person name="Shalmon L."/>
            <person name="Shalev H."/>
            <person name="Eidelitz-Markus T."/>
            <person name="Kapelushnik J."/>
            <person name="Cattan D."/>
            <person name="Pariente A."/>
            <person name="Tulliez M."/>
            <person name="Cretien A."/>
            <person name="Schischmanoff P.-O."/>
            <person name="Iolascon A."/>
            <person name="Fibach E."/>
            <person name="Koren A."/>
            <person name="Roessler J."/>
            <person name="Le Merrer M."/>
            <person name="Yaniv I."/>
            <person name="Zaizov R."/>
            <person name="Ben-Asher E."/>
            <person name="Olender T."/>
            <person name="Lancet D."/>
            <person name="Beckmann J.S."/>
            <person name="Tamary H."/>
        </authorList>
    </citation>
    <scope>NUCLEOTIDE SEQUENCE [MRNA] OF 18-1727 (ISOFORM 1)</scope>
    <source>
        <tissue>Erythroid cell</tissue>
    </source>
</reference>
<reference key="4">
    <citation type="journal article" date="2004" name="Nat. Genet.">
        <title>Complete sequencing and characterization of 21,243 full-length human cDNAs.</title>
        <authorList>
            <person name="Ota T."/>
            <person name="Suzuki Y."/>
            <person name="Nishikawa T."/>
            <person name="Otsuki T."/>
            <person name="Sugiyama T."/>
            <person name="Irie R."/>
            <person name="Wakamatsu A."/>
            <person name="Hayashi K."/>
            <person name="Sato H."/>
            <person name="Nagai K."/>
            <person name="Kimura K."/>
            <person name="Makita H."/>
            <person name="Sekine M."/>
            <person name="Obayashi M."/>
            <person name="Nishi T."/>
            <person name="Shibahara T."/>
            <person name="Tanaka T."/>
            <person name="Ishii S."/>
            <person name="Yamamoto J."/>
            <person name="Saito K."/>
            <person name="Kawai Y."/>
            <person name="Isono Y."/>
            <person name="Nakamura Y."/>
            <person name="Nagahari K."/>
            <person name="Murakami K."/>
            <person name="Yasuda T."/>
            <person name="Iwayanagi T."/>
            <person name="Wagatsuma M."/>
            <person name="Shiratori A."/>
            <person name="Sudo H."/>
            <person name="Hosoiri T."/>
            <person name="Kaku Y."/>
            <person name="Kodaira H."/>
            <person name="Kondo H."/>
            <person name="Sugawara M."/>
            <person name="Takahashi M."/>
            <person name="Kanda K."/>
            <person name="Yokoi T."/>
            <person name="Furuya T."/>
            <person name="Kikkawa E."/>
            <person name="Omura Y."/>
            <person name="Abe K."/>
            <person name="Kamihara K."/>
            <person name="Katsuta N."/>
            <person name="Sato K."/>
            <person name="Tanikawa M."/>
            <person name="Yamazaki M."/>
            <person name="Ninomiya K."/>
            <person name="Ishibashi T."/>
            <person name="Yamashita H."/>
            <person name="Murakawa K."/>
            <person name="Fujimori K."/>
            <person name="Tanai H."/>
            <person name="Kimata M."/>
            <person name="Watanabe M."/>
            <person name="Hiraoka S."/>
            <person name="Chiba Y."/>
            <person name="Ishida S."/>
            <person name="Ono Y."/>
            <person name="Takiguchi S."/>
            <person name="Watanabe S."/>
            <person name="Yosida M."/>
            <person name="Hotuta T."/>
            <person name="Kusano J."/>
            <person name="Kanehori K."/>
            <person name="Takahashi-Fujii A."/>
            <person name="Hara H."/>
            <person name="Tanase T.-O."/>
            <person name="Nomura Y."/>
            <person name="Togiya S."/>
            <person name="Komai F."/>
            <person name="Hara R."/>
            <person name="Takeuchi K."/>
            <person name="Arita M."/>
            <person name="Imose N."/>
            <person name="Musashino K."/>
            <person name="Yuuki H."/>
            <person name="Oshima A."/>
            <person name="Sasaki N."/>
            <person name="Aotsuka S."/>
            <person name="Yoshikawa Y."/>
            <person name="Matsunawa H."/>
            <person name="Ichihara T."/>
            <person name="Shiohata N."/>
            <person name="Sano S."/>
            <person name="Moriya S."/>
            <person name="Momiyama H."/>
            <person name="Satoh N."/>
            <person name="Takami S."/>
            <person name="Terashima Y."/>
            <person name="Suzuki O."/>
            <person name="Nakagawa S."/>
            <person name="Senoh A."/>
            <person name="Mizoguchi H."/>
            <person name="Goto Y."/>
            <person name="Shimizu F."/>
            <person name="Wakebe H."/>
            <person name="Hishigaki H."/>
            <person name="Watanabe T."/>
            <person name="Sugiyama A."/>
            <person name="Takemoto M."/>
            <person name="Kawakami B."/>
            <person name="Yamazaki M."/>
            <person name="Watanabe K."/>
            <person name="Kumagai A."/>
            <person name="Itakura S."/>
            <person name="Fukuzumi Y."/>
            <person name="Fujimori Y."/>
            <person name="Komiyama M."/>
            <person name="Tashiro H."/>
            <person name="Tanigami A."/>
            <person name="Fujiwara T."/>
            <person name="Ono T."/>
            <person name="Yamada K."/>
            <person name="Fujii Y."/>
            <person name="Ozaki K."/>
            <person name="Hirao M."/>
            <person name="Ohmori Y."/>
            <person name="Kawabata A."/>
            <person name="Hikiji T."/>
            <person name="Kobatake N."/>
            <person name="Inagaki H."/>
            <person name="Ikema Y."/>
            <person name="Okamoto S."/>
            <person name="Okitani R."/>
            <person name="Kawakami T."/>
            <person name="Noguchi S."/>
            <person name="Itoh T."/>
            <person name="Shigeta K."/>
            <person name="Senba T."/>
            <person name="Matsumura K."/>
            <person name="Nakajima Y."/>
            <person name="Mizuno T."/>
            <person name="Morinaga M."/>
            <person name="Sasaki M."/>
            <person name="Togashi T."/>
            <person name="Oyama M."/>
            <person name="Hata H."/>
            <person name="Watanabe M."/>
            <person name="Komatsu T."/>
            <person name="Mizushima-Sugano J."/>
            <person name="Satoh T."/>
            <person name="Shirai Y."/>
            <person name="Takahashi Y."/>
            <person name="Nakagawa K."/>
            <person name="Okumura K."/>
            <person name="Nagase T."/>
            <person name="Nomura N."/>
            <person name="Kikuchi H."/>
            <person name="Masuho Y."/>
            <person name="Yamashita R."/>
            <person name="Nakai K."/>
            <person name="Yada T."/>
            <person name="Nakamura Y."/>
            <person name="Ohara O."/>
            <person name="Isogai T."/>
            <person name="Sugano S."/>
        </authorList>
    </citation>
    <scope>NUCLEOTIDE SEQUENCE [LARGE SCALE MRNA] OF 166-1014 (ISOFORM 1)</scope>
    <source>
        <tissue>Placenta</tissue>
    </source>
</reference>
<reference key="5">
    <citation type="journal article" date="2007" name="BMC Genomics">
        <title>The full-ORF clone resource of the German cDNA consortium.</title>
        <authorList>
            <person name="Bechtel S."/>
            <person name="Rosenfelder H."/>
            <person name="Duda A."/>
            <person name="Schmidt C.P."/>
            <person name="Ernst U."/>
            <person name="Wellenreuther R."/>
            <person name="Mehrle A."/>
            <person name="Schuster C."/>
            <person name="Bahr A."/>
            <person name="Bloecker H."/>
            <person name="Heubner D."/>
            <person name="Hoerlein A."/>
            <person name="Michel G."/>
            <person name="Wedler H."/>
            <person name="Koehrer K."/>
            <person name="Ottenwaelder B."/>
            <person name="Poustka A."/>
            <person name="Wiemann S."/>
            <person name="Schupp I."/>
        </authorList>
    </citation>
    <scope>NUCLEOTIDE SEQUENCE [LARGE SCALE MRNA] OF 656-1749 (ISOFORM 2)</scope>
    <source>
        <tissue>Heart</tissue>
    </source>
</reference>
<reference key="6">
    <citation type="journal article" date="1998" name="Proc. Natl. Acad. Sci. U.S.A.">
        <title>The mouse and human genes encoding the recognition component of the N-end rule pathway.</title>
        <authorList>
            <person name="Kwon Y.T."/>
            <person name="Reiss Y."/>
            <person name="Fried V.A."/>
            <person name="Hershko A."/>
            <person name="Yoon J.K."/>
            <person name="Gonda D.K."/>
            <person name="Sangan P."/>
            <person name="Copeland N.G."/>
            <person name="Jenkins N.A."/>
            <person name="Varshavsky A."/>
        </authorList>
    </citation>
    <scope>NUCLEOTIDE SEQUENCE [GENOMIC DNA / MRNA] OF 702-1034 (ISOFORM 1)</scope>
    <scope>TISSUE SPECIFICITY</scope>
</reference>
<reference key="7">
    <citation type="journal article" date="2004" name="Hum. Mol. Genet.">
        <title>RECQL4, mutated in the Rothmund-Thomson and RAPADILINO syndromes, interacts with ubiquitin ligases UBR1 and UBR2 of the N-end rule pathway.</title>
        <authorList>
            <person name="Yin J."/>
            <person name="Kwon Y.T."/>
            <person name="Varshavsky A."/>
            <person name="Wang W."/>
        </authorList>
    </citation>
    <scope>INTERACTION WITH RECQL4</scope>
    <scope>IDENTIFICATION BY MASS SPECTROMETRY</scope>
</reference>
<reference key="8">
    <citation type="journal article" date="2007" name="Science">
        <title>ATM and ATR substrate analysis reveals extensive protein networks responsive to DNA damage.</title>
        <authorList>
            <person name="Matsuoka S."/>
            <person name="Ballif B.A."/>
            <person name="Smogorzewska A."/>
            <person name="McDonald E.R. III"/>
            <person name="Hurov K.E."/>
            <person name="Luo J."/>
            <person name="Bakalarski C.E."/>
            <person name="Zhao Z."/>
            <person name="Solimini N."/>
            <person name="Lerenthal Y."/>
            <person name="Shiloh Y."/>
            <person name="Gygi S.P."/>
            <person name="Elledge S.J."/>
        </authorList>
    </citation>
    <scope>PHOSPHORYLATION [LARGE SCALE ANALYSIS] AT SER-1179</scope>
    <scope>IDENTIFICATION BY MASS SPECTROMETRY [LARGE SCALE ANALYSIS]</scope>
    <source>
        <tissue>Embryonic kidney</tissue>
    </source>
</reference>
<reference key="9">
    <citation type="journal article" date="2008" name="Mol. Cell">
        <title>Kinase-selective enrichment enables quantitative phosphoproteomics of the kinome across the cell cycle.</title>
        <authorList>
            <person name="Daub H."/>
            <person name="Olsen J.V."/>
            <person name="Bairlein M."/>
            <person name="Gnad F."/>
            <person name="Oppermann F.S."/>
            <person name="Korner R."/>
            <person name="Greff Z."/>
            <person name="Keri G."/>
            <person name="Stemmann O."/>
            <person name="Mann M."/>
        </authorList>
    </citation>
    <scope>PHOSPHORYLATION [LARGE SCALE ANALYSIS] AT THR-21</scope>
    <scope>IDENTIFICATION BY MASS SPECTROMETRY [LARGE SCALE ANALYSIS]</scope>
    <source>
        <tissue>Cervix carcinoma</tissue>
    </source>
</reference>
<reference key="10">
    <citation type="journal article" date="2008" name="Proc. Natl. Acad. Sci. U.S.A.">
        <title>Synthetic heterovalent inhibitors targeting recognition E3 components of the N-end rule pathway.</title>
        <authorList>
            <person name="Lee M.J."/>
            <person name="Pal K."/>
            <person name="Tasaki T."/>
            <person name="Roy S."/>
            <person name="Jiang Y."/>
            <person name="An J.Y."/>
            <person name="Banerjee R."/>
            <person name="Kwon Y.T."/>
        </authorList>
    </citation>
    <scope>FUNCTION</scope>
    <scope>CATALYTIC ACTIVITY</scope>
    <scope>ACTIVITY REGULATION</scope>
    <scope>PATHWAY</scope>
</reference>
<reference key="11">
    <citation type="journal article" date="2009" name="Mol. Cell. Proteomics">
        <title>Large-scale proteomics analysis of the human kinome.</title>
        <authorList>
            <person name="Oppermann F.S."/>
            <person name="Gnad F."/>
            <person name="Olsen J.V."/>
            <person name="Hornberger R."/>
            <person name="Greff Z."/>
            <person name="Keri G."/>
            <person name="Mann M."/>
            <person name="Daub H."/>
        </authorList>
    </citation>
    <scope>ACETYLATION [LARGE SCALE ANALYSIS] AT ALA-2</scope>
    <scope>PHOSPHORYLATION [LARGE SCALE ANALYSIS] AT THR-21</scope>
    <scope>CLEAVAGE OF INITIATOR METHIONINE [LARGE SCALE ANALYSIS]</scope>
    <scope>IDENTIFICATION BY MASS SPECTROMETRY [LARGE SCALE ANALYSIS]</scope>
</reference>
<reference key="12">
    <citation type="journal article" date="2009" name="Sci. Signal.">
        <title>Quantitative phosphoproteomic analysis of T cell receptor signaling reveals system-wide modulation of protein-protein interactions.</title>
        <authorList>
            <person name="Mayya V."/>
            <person name="Lundgren D.H."/>
            <person name="Hwang S.-I."/>
            <person name="Rezaul K."/>
            <person name="Wu L."/>
            <person name="Eng J.K."/>
            <person name="Rodionov V."/>
            <person name="Han D.K."/>
        </authorList>
    </citation>
    <scope>PHOSPHORYLATION [LARGE SCALE ANALYSIS] AT THR-21</scope>
    <scope>IDENTIFICATION BY MASS SPECTROMETRY [LARGE SCALE ANALYSIS]</scope>
    <source>
        <tissue>Leukemic T-cell</tissue>
    </source>
</reference>
<reference key="13">
    <citation type="journal article" date="2010" name="Genes Cells">
        <title>Role of N-end rule ubiquitin ligases UBR1 and UBR2 in regulating the leucine-mTOR signaling pathway.</title>
        <authorList>
            <person name="Kume K."/>
            <person name="Iizumi Y."/>
            <person name="Shimada M."/>
            <person name="Ito Y."/>
            <person name="Kishi T."/>
            <person name="Yamaguchi Y."/>
            <person name="Handa H."/>
        </authorList>
    </citation>
    <scope>FUNCTION</scope>
</reference>
<reference key="14">
    <citation type="journal article" date="2013" name="J. Proteome Res.">
        <title>Toward a comprehensive characterization of a human cancer cell phosphoproteome.</title>
        <authorList>
            <person name="Zhou H."/>
            <person name="Di Palma S."/>
            <person name="Preisinger C."/>
            <person name="Peng M."/>
            <person name="Polat A.N."/>
            <person name="Heck A.J."/>
            <person name="Mohammed S."/>
        </authorList>
    </citation>
    <scope>PHOSPHORYLATION [LARGE SCALE ANALYSIS] AT THR-21</scope>
    <scope>IDENTIFICATION BY MASS SPECTROMETRY [LARGE SCALE ANALYSIS]</scope>
    <source>
        <tissue>Cervix carcinoma</tissue>
        <tissue>Erythroleukemia</tissue>
    </source>
</reference>
<reference key="15">
    <citation type="journal article" date="2014" name="J. Proteomics">
        <title>An enzyme assisted RP-RPLC approach for in-depth analysis of human liver phosphoproteome.</title>
        <authorList>
            <person name="Bian Y."/>
            <person name="Song C."/>
            <person name="Cheng K."/>
            <person name="Dong M."/>
            <person name="Wang F."/>
            <person name="Huang J."/>
            <person name="Sun D."/>
            <person name="Wang L."/>
            <person name="Ye M."/>
            <person name="Zou H."/>
        </authorList>
    </citation>
    <scope>PHOSPHORYLATION [LARGE SCALE ANALYSIS] AT THR-21</scope>
    <scope>IDENTIFICATION BY MASS SPECTROMETRY [LARGE SCALE ANALYSIS]</scope>
    <source>
        <tissue>Liver</tissue>
    </source>
</reference>
<reference evidence="22" key="16">
    <citation type="journal article" date="2010" name="Nat. Struct. Mol. Biol.">
        <title>Structural basis of substrate recognition and specificity in the N-end rule pathway.</title>
        <authorList>
            <person name="Matta-Camacho E."/>
            <person name="Kozlov G."/>
            <person name="Li F.F."/>
            <person name="Gehring K."/>
        </authorList>
    </citation>
    <scope>X-RAY CRYSTALLOGRAPHY (1.6 ANGSTROMS) OF 98-167 IN COMPLEX WITH ZINC</scope>
    <scope>UBR-TYPE ZINC-FINGER</scope>
    <scope>FUNCTION</scope>
    <scope>VARIANT JB5 ARG-136</scope>
</reference>
<reference evidence="23" key="17">
    <citation type="journal article" date="2017" name="Structure">
        <title>Bound waters mediate binding of diverse substrates to a ubiquitin ligase.</title>
        <authorList>
            <person name="Munoz-Escobar J."/>
            <person name="Matta-Camacho E."/>
            <person name="Cho C."/>
            <person name="Kozlov G."/>
            <person name="Gehring K."/>
        </authorList>
    </citation>
    <scope>X-RAY CRYSTALLOGRAPHY (1.61 ANGSTROMS) OF 98-168 IN COMPLEX WITH N-DEGRON PEPTIDE AND ZINC</scope>
    <scope>FUNCTION</scope>
    <scope>CHARACTERIZATION OF VARIANT JBS VAL-122</scope>
</reference>
<reference key="18">
    <citation type="journal article" date="2005" name="Nat. Genet.">
        <title>Deficiency of UBR1, a ubiquitin ligase of the N-end rule pathway, causes pancreatic dysfunction, malformations and mental retardation (Johanson-Blizzard syndrome).</title>
        <authorList>
            <person name="Zenker M."/>
            <person name="Mayerle J."/>
            <person name="Lerch M.M."/>
            <person name="Tagariello A."/>
            <person name="Zerres K."/>
            <person name="Durie P.R."/>
            <person name="Beier M."/>
            <person name="Hulskamp G."/>
            <person name="Guzman C."/>
            <person name="Rehder H."/>
            <person name="Beemer F.A."/>
            <person name="Hamel B.C.J."/>
            <person name="Vanlieferinghen P."/>
            <person name="Gershoni-Baruch R."/>
            <person name="Vieira M.W."/>
            <person name="Dumic M."/>
            <person name="Auslender R."/>
            <person name="Gil-da-Silva-Lopes V.L."/>
            <person name="Steinlicht S."/>
            <person name="Rauh M."/>
            <person name="Shalev S.A."/>
            <person name="Thiel C."/>
            <person name="Winterpacht A."/>
            <person name="Kwon Y.T."/>
            <person name="Varshavsky A."/>
            <person name="Reis A."/>
        </authorList>
    </citation>
    <scope>VARIANTS JBS ARG-136 AND SER-1279</scope>
    <scope>FUNCTION</scope>
    <scope>DISEASE</scope>
    <scope>TISSUE SPECIFICITY</scope>
    <scope>SUBCELLULAR LOCATION</scope>
    <scope>DEVELOPMENTAL STAGE</scope>
</reference>
<reference key="19">
    <citation type="journal article" date="2011" name="PLoS ONE">
        <title>Ubiquitin ligases of the N-end rule pathway: assessment of mutations in UBR1 that cause the Johanson-Blizzard syndrome.</title>
        <authorList>
            <person name="Hwang C.S."/>
            <person name="Sukalo M."/>
            <person name="Batygin O."/>
            <person name="Addor M.C."/>
            <person name="Brunner H."/>
            <person name="Aytes A.P."/>
            <person name="Mayerle J."/>
            <person name="Song H.K."/>
            <person name="Varshavsky A."/>
            <person name="Zenker M."/>
        </authorList>
    </citation>
    <scope>VARIANTS JBS LEU-122; ARG-136 AND GLU-1102</scope>
    <scope>CHARACTERIZATION OF VARIANTS JBS LEU-122; ARG-136 AND GLU-1102</scope>
</reference>
<reference key="20">
    <citation type="journal article" date="2011" name="World J. Gastroenterol.">
        <title>Johanson-Blizzard syndrome.</title>
        <authorList>
            <person name="Almashraki N."/>
            <person name="Abdulnabee M.Z."/>
            <person name="Sukalo M."/>
            <person name="Alrajoudi A."/>
            <person name="Sharafadeen I."/>
            <person name="Zenker M."/>
        </authorList>
    </citation>
    <scope>VARIANT JBS PRO-700</scope>
</reference>
<reference key="21">
    <citation type="journal article" date="2014" name="Hum. Mutat.">
        <title>Mutations in the human UBR1 gene and the associated phenotypic spectrum.</title>
        <authorList>
            <person name="Sukalo M."/>
            <person name="Fiedler A."/>
            <person name="Guzman C."/>
            <person name="Spranger S."/>
            <person name="Addor M.C."/>
            <person name="McHeik J.N."/>
            <person name="Oltra Benavent M."/>
            <person name="Cobben J.M."/>
            <person name="Gillis L.A."/>
            <person name="Shealy A.G."/>
            <person name="Deshpande C."/>
            <person name="Bozorgmehr B."/>
            <person name="Everman D.B."/>
            <person name="Stattin E.L."/>
            <person name="Liebelt J."/>
            <person name="Keller K.M."/>
            <person name="Bertola D.R."/>
            <person name="van Karnebeek C.D."/>
            <person name="Bergmann C."/>
            <person name="Liu Z."/>
            <person name="Dueker G."/>
            <person name="Rezaei N."/>
            <person name="Alkuraya F.S."/>
            <person name="Ogur G."/>
            <person name="Alrajoudi A."/>
            <person name="Venegas-Vega C.A."/>
            <person name="Verbeek N.E."/>
            <person name="Richmond E.J."/>
            <person name="Kirbiyik O."/>
            <person name="Ranganath P."/>
            <person name="Singh A."/>
            <person name="Godbole K."/>
            <person name="Ali F.A."/>
            <person name="Alves C."/>
            <person name="Mayerle J."/>
            <person name="Lerch M.M."/>
            <person name="Witt H."/>
            <person name="Zenker M."/>
        </authorList>
    </citation>
    <scope>VARIANTS JBS LEU-122; PHE-127; ARG-136; ARG-166; ARG-217; ARG-286; PRO-317; 389-ALA--PHE-392 DEL; ASP-563; VAL-660 DEL; PRO-700; CYS-754; HIS-754; GLU-1102; GLY-1242; SER-1279; LEU-1426; PHE-1427; PRO-1431 AND ARG-1661</scope>
</reference>
<reference key="22">
    <citation type="journal article" date="2015" name="Gene">
        <title>Two novel UBR1 gene mutations in a patient with Johanson Blizzard Syndrome: A mild phenotype without mental retardation.</title>
        <authorList>
            <person name="Atik T."/>
            <person name="Karakoyun M."/>
            <person name="Sukalo M."/>
            <person name="Zenker M."/>
            <person name="Ozkinay F."/>
            <person name="Aydogdu S."/>
        </authorList>
    </citation>
    <scope>VARIANT JBS ARG-427</scope>
</reference>
<keyword id="KW-0002">3D-structure</keyword>
<keyword id="KW-0007">Acetylation</keyword>
<keyword id="KW-0025">Alternative splicing</keyword>
<keyword id="KW-0963">Cytoplasm</keyword>
<keyword id="KW-0225">Disease variant</keyword>
<keyword id="KW-0479">Metal-binding</keyword>
<keyword id="KW-0597">Phosphoprotein</keyword>
<keyword id="KW-1267">Proteomics identification</keyword>
<keyword id="KW-1185">Reference proteome</keyword>
<keyword id="KW-0808">Transferase</keyword>
<keyword id="KW-0833">Ubl conjugation pathway</keyword>
<keyword id="KW-0862">Zinc</keyword>
<keyword id="KW-0863">Zinc-finger</keyword>
<gene>
    <name evidence="17 21" type="primary">UBR1</name>
</gene>
<comment type="function">
    <text evidence="6 7 8 9 10 15">E3 ubiquitin-protein ligase which is a component of the N-end rule pathway (PubMed:15548684, PubMed:16311597, PubMed:18162545, PubMed:20835242, PubMed:28392261). Recognizes and binds proteins bearing specific N-terminal residues that are destabilizing according to the N-end rule, leading to their ubiquitination and subsequent degradation (PubMed:18162545, PubMed:20835242, PubMed:28392261). Recognizes both type-1 and type-2 N-degrons, containing positively charged amino acids (Arg, Lys and His) and bulky and hydrophobic amino acids, respectively (PubMed:18162545). Does not ubiquitinate proteins that are acetylated at the N-terminus (PubMed:20835242). In contrast, it strongly binds methylated N-degrons (PubMed:28392261). Binds leucine and is a negative regulator of the leucine-mTOR signaling pathway, thereby controlling cell growth (PubMed:20298436).</text>
</comment>
<comment type="catalytic activity">
    <reaction evidence="8">
        <text>S-ubiquitinyl-[E2 ubiquitin-conjugating enzyme]-L-cysteine + [acceptor protein]-L-lysine = [E2 ubiquitin-conjugating enzyme]-L-cysteine + N(6)-ubiquitinyl-[acceptor protein]-L-lysine.</text>
        <dbReference type="EC" id="2.3.2.27"/>
    </reaction>
</comment>
<comment type="activity regulation">
    <text evidence="8">Inhibited by the small-molecule compound RF-C11, which bears two heterovalent ligands: RF-C11 inhibits activity toward both type-1 and type-2 N-degrons.</text>
</comment>
<comment type="pathway">
    <text evidence="8">Protein modification; protein ubiquitination.</text>
</comment>
<comment type="subunit">
    <text evidence="5 10">Interacts with RECQL4.</text>
</comment>
<comment type="interaction">
    <interactant intactId="EBI-711736">
        <id>Q8IWV7</id>
    </interactant>
    <interactant intactId="EBI-3870390">
        <id>P06850</id>
        <label>CRH</label>
    </interactant>
    <organismsDiffer>false</organismsDiffer>
    <experiments>2</experiments>
</comment>
<comment type="interaction">
    <interactant intactId="EBI-711736">
        <id>Q8IWV7</id>
    </interactant>
    <interactant intactId="EBI-7133736">
        <id>P07686</id>
        <label>HEXB</label>
    </interactant>
    <organismsDiffer>false</organismsDiffer>
    <experiments>3</experiments>
</comment>
<comment type="interaction">
    <interactant intactId="EBI-711736">
        <id>Q8IWV7</id>
    </interactant>
    <interactant intactId="EBI-1776152">
        <id>Q9BY77</id>
        <label>POLDIP3</label>
    </interactant>
    <organismsDiffer>false</organismsDiffer>
    <experiments>2</experiments>
</comment>
<comment type="interaction">
    <interactant intactId="EBI-711736">
        <id>Q8IWV7</id>
    </interactant>
    <interactant intactId="EBI-5235340">
        <id>Q7Z699</id>
        <label>SPRED1</label>
    </interactant>
    <organismsDiffer>false</organismsDiffer>
    <experiments>3</experiments>
</comment>
<comment type="interaction">
    <interactant intactId="EBI-711736">
        <id>Q8IWV7</id>
    </interactant>
    <interactant intactId="EBI-711909">
        <id>P02766</id>
        <label>TTR</label>
    </interactant>
    <organismsDiffer>false</organismsDiffer>
    <experiments>3</experiments>
</comment>
<comment type="interaction">
    <interactant intactId="EBI-711736">
        <id>Q8IWV7</id>
    </interactant>
    <interactant intactId="EBI-712629">
        <id>P63146</id>
        <label>UBE2B</label>
    </interactant>
    <organismsDiffer>false</organismsDiffer>
    <experiments>2</experiments>
</comment>
<comment type="subcellular location">
    <subcellularLocation>
        <location evidence="7">Cytoplasm</location>
        <location evidence="7">Cytosol</location>
    </subcellularLocation>
</comment>
<comment type="alternative products">
    <event type="alternative splicing"/>
    <isoform>
        <id>Q8IWV7-1</id>
        <name>1</name>
        <sequence type="displayed"/>
    </isoform>
    <isoform>
        <id>Q8IWV7-2</id>
        <name>2</name>
        <sequence type="described" ref="VSP_015164 VSP_015165"/>
    </isoform>
</comment>
<comment type="tissue specificity">
    <text evidence="6 7 16">Broadly expressed, with highest levels in skeletal muscle, kidney and pancreas. Present in acinar cells of the pancreas (at protein level).</text>
</comment>
<comment type="developmental stage">
    <text evidence="7">Expressed in fetal pancreas.</text>
</comment>
<comment type="domain">
    <text evidence="10 15 23">The RING-H2 zinc finger is an atypical RING finger with a His ligand in place of the fourth Cys of the classical motif (PubMed:20835242). The UBR-type zinc finger forms a pocket that mediates recognition of type 1 N-degrons (PubMed:20835242, PubMed:28392261). It exhibits preference for arginine in the first position (PubMed:20835242). It binds N-degrons with a methylated arginine in the first position (PubMed:28392261).</text>
</comment>
<comment type="disease" evidence="7 11 12 13 14 15">
    <disease id="DI-01849">
        <name>Johanson-Blizzard syndrome</name>
        <acronym>JBS</acronym>
        <description>This disorder includes congenital exocrine pancreatic insufficiency, multiple malformations such as nasal wing aplasia, and intellectual disability. Pancreas of individuals with JBS do not express UBR1 and show intrauterine-onset destructive pancreatitis.</description>
        <dbReference type="MIM" id="243800"/>
    </disease>
    <text>The disease is caused by variants affecting the gene represented in this entry.</text>
</comment>
<comment type="similarity">
    <text evidence="20">Belongs to the E3 ubiquitin-protein ligase UBR1-like family.</text>
</comment>
<comment type="sequence caution" evidence="20">
    <conflict type="erroneous initiation">
        <sequence resource="EMBL-CDS" id="BAB55380"/>
    </conflict>
</comment>
<protein>
    <recommendedName>
        <fullName evidence="20">E3 ubiquitin-protein ligase UBR1</fullName>
        <ecNumber evidence="8">2.3.2.27</ecNumber>
    </recommendedName>
    <alternativeName>
        <fullName>N-recognin-1</fullName>
    </alternativeName>
    <alternativeName>
        <fullName evidence="18">Ubiquitin-protein ligase E3-alpha-1</fullName>
    </alternativeName>
    <alternativeName>
        <fullName evidence="18">Ubiquitin-protein ligase E3-alpha-I</fullName>
    </alternativeName>
</protein>
<name>UBR1_HUMAN</name>
<organism>
    <name type="scientific">Homo sapiens</name>
    <name type="common">Human</name>
    <dbReference type="NCBI Taxonomy" id="9606"/>
    <lineage>
        <taxon>Eukaryota</taxon>
        <taxon>Metazoa</taxon>
        <taxon>Chordata</taxon>
        <taxon>Craniata</taxon>
        <taxon>Vertebrata</taxon>
        <taxon>Euteleostomi</taxon>
        <taxon>Mammalia</taxon>
        <taxon>Eutheria</taxon>
        <taxon>Euarchontoglires</taxon>
        <taxon>Primates</taxon>
        <taxon>Haplorrhini</taxon>
        <taxon>Catarrhini</taxon>
        <taxon>Hominidae</taxon>
        <taxon>Homo</taxon>
    </lineage>
</organism>
<dbReference type="EC" id="2.3.2.27" evidence="8"/>
<dbReference type="EMBL" id="AY061886">
    <property type="protein sequence ID" value="AAL32103.1"/>
    <property type="molecule type" value="mRNA"/>
</dbReference>
<dbReference type="EMBL" id="BC113505">
    <property type="protein sequence ID" value="AAI13506.1"/>
    <property type="molecule type" value="mRNA"/>
</dbReference>
<dbReference type="EMBL" id="BC113507">
    <property type="protein sequence ID" value="AAI13508.1"/>
    <property type="molecule type" value="mRNA"/>
</dbReference>
<dbReference type="EMBL" id="AF525401">
    <property type="protein sequence ID" value="AAO14997.1"/>
    <property type="molecule type" value="mRNA"/>
</dbReference>
<dbReference type="EMBL" id="AK027803">
    <property type="protein sequence ID" value="BAB55380.1"/>
    <property type="status" value="ALT_INIT"/>
    <property type="molecule type" value="mRNA"/>
</dbReference>
<dbReference type="EMBL" id="CR749326">
    <property type="protein sequence ID" value="CAH18181.1"/>
    <property type="molecule type" value="mRNA"/>
</dbReference>
<dbReference type="EMBL" id="AF061556">
    <property type="protein sequence ID" value="AAC39845.1"/>
    <property type="molecule type" value="mRNA"/>
</dbReference>
<dbReference type="EMBL" id="AH006181">
    <property type="protein sequence ID" value="AAC23677.1"/>
    <property type="molecule type" value="Genomic_DNA"/>
</dbReference>
<dbReference type="CCDS" id="CCDS10091.1">
    <molecule id="Q8IWV7-1"/>
</dbReference>
<dbReference type="RefSeq" id="NP_777576.1">
    <molecule id="Q8IWV7-1"/>
    <property type="nucleotide sequence ID" value="NM_174916.3"/>
</dbReference>
<dbReference type="PDB" id="3NY1">
    <property type="method" value="X-ray"/>
    <property type="resolution" value="2.08 A"/>
    <property type="chains" value="A/B=97-168"/>
</dbReference>
<dbReference type="PDB" id="5TDC">
    <property type="method" value="X-ray"/>
    <property type="resolution" value="1.61 A"/>
    <property type="chains" value="A/C=98-168"/>
</dbReference>
<dbReference type="PDBsum" id="3NY1"/>
<dbReference type="PDBsum" id="5TDC"/>
<dbReference type="SMR" id="Q8IWV7"/>
<dbReference type="BioGRID" id="128238">
    <property type="interactions" value="207"/>
</dbReference>
<dbReference type="DIP" id="DIP-47033N"/>
<dbReference type="FunCoup" id="Q8IWV7">
    <property type="interactions" value="1547"/>
</dbReference>
<dbReference type="IntAct" id="Q8IWV7">
    <property type="interactions" value="119"/>
</dbReference>
<dbReference type="MINT" id="Q8IWV7"/>
<dbReference type="STRING" id="9606.ENSP00000290650"/>
<dbReference type="GlyCosmos" id="Q8IWV7">
    <property type="glycosylation" value="1 site, 1 glycan"/>
</dbReference>
<dbReference type="GlyGen" id="Q8IWV7">
    <property type="glycosylation" value="1 site, 1 O-linked glycan (1 site)"/>
</dbReference>
<dbReference type="iPTMnet" id="Q8IWV7"/>
<dbReference type="MetOSite" id="Q8IWV7"/>
<dbReference type="PhosphoSitePlus" id="Q8IWV7"/>
<dbReference type="SwissPalm" id="Q8IWV7"/>
<dbReference type="BioMuta" id="UBR1"/>
<dbReference type="DMDM" id="73622071"/>
<dbReference type="jPOST" id="Q8IWV7"/>
<dbReference type="MassIVE" id="Q8IWV7"/>
<dbReference type="PaxDb" id="9606-ENSP00000290650"/>
<dbReference type="PeptideAtlas" id="Q8IWV7"/>
<dbReference type="ProteomicsDB" id="70907">
    <molecule id="Q8IWV7-1"/>
</dbReference>
<dbReference type="ProteomicsDB" id="70908">
    <molecule id="Q8IWV7-2"/>
</dbReference>
<dbReference type="Pumba" id="Q8IWV7"/>
<dbReference type="Antibodypedia" id="23750">
    <property type="antibodies" value="210 antibodies from 28 providers"/>
</dbReference>
<dbReference type="DNASU" id="197131"/>
<dbReference type="Ensembl" id="ENST00000290650.9">
    <molecule id="Q8IWV7-1"/>
    <property type="protein sequence ID" value="ENSP00000290650.4"/>
    <property type="gene ID" value="ENSG00000159459.12"/>
</dbReference>
<dbReference type="GeneID" id="197131"/>
<dbReference type="KEGG" id="hsa:197131"/>
<dbReference type="MANE-Select" id="ENST00000290650.9">
    <property type="protein sequence ID" value="ENSP00000290650.4"/>
    <property type="RefSeq nucleotide sequence ID" value="NM_174916.3"/>
    <property type="RefSeq protein sequence ID" value="NP_777576.1"/>
</dbReference>
<dbReference type="UCSC" id="uc001zqq.4">
    <molecule id="Q8IWV7-1"/>
    <property type="organism name" value="human"/>
</dbReference>
<dbReference type="AGR" id="HGNC:16808"/>
<dbReference type="CTD" id="197131"/>
<dbReference type="DisGeNET" id="197131"/>
<dbReference type="GeneCards" id="UBR1"/>
<dbReference type="GeneReviews" id="UBR1"/>
<dbReference type="HGNC" id="HGNC:16808">
    <property type="gene designation" value="UBR1"/>
</dbReference>
<dbReference type="HPA" id="ENSG00000159459">
    <property type="expression patterns" value="Low tissue specificity"/>
</dbReference>
<dbReference type="MalaCards" id="UBR1"/>
<dbReference type="MIM" id="243800">
    <property type="type" value="phenotype"/>
</dbReference>
<dbReference type="MIM" id="605981">
    <property type="type" value="gene"/>
</dbReference>
<dbReference type="neXtProt" id="NX_Q8IWV7"/>
<dbReference type="OpenTargets" id="ENSG00000159459"/>
<dbReference type="Orphanet" id="2315">
    <property type="disease" value="Johanson-Blizzard syndrome"/>
</dbReference>
<dbReference type="PharmGKB" id="PA38187"/>
<dbReference type="VEuPathDB" id="HostDB:ENSG00000159459"/>
<dbReference type="eggNOG" id="KOG1140">
    <property type="taxonomic scope" value="Eukaryota"/>
</dbReference>
<dbReference type="GeneTree" id="ENSGT00950000183075"/>
<dbReference type="HOGENOM" id="CLU_001801_2_0_1"/>
<dbReference type="InParanoid" id="Q8IWV7"/>
<dbReference type="OMA" id="GWYLWAS"/>
<dbReference type="OrthoDB" id="26387at2759"/>
<dbReference type="PAN-GO" id="Q8IWV7">
    <property type="GO annotations" value="5 GO annotations based on evolutionary models"/>
</dbReference>
<dbReference type="PhylomeDB" id="Q8IWV7"/>
<dbReference type="TreeFam" id="TF323875"/>
<dbReference type="BioCyc" id="MetaCyc:ENSG00000159459-MONOMER"/>
<dbReference type="BRENDA" id="3.4.17.20">
    <property type="organism ID" value="2681"/>
</dbReference>
<dbReference type="PathwayCommons" id="Q8IWV7"/>
<dbReference type="Reactome" id="R-HSA-983168">
    <property type="pathway name" value="Antigen processing: Ubiquitination &amp; Proteasome degradation"/>
</dbReference>
<dbReference type="SignaLink" id="Q8IWV7"/>
<dbReference type="SIGNOR" id="Q8IWV7"/>
<dbReference type="UniPathway" id="UPA00143"/>
<dbReference type="BioGRID-ORCS" id="197131">
    <property type="hits" value="11 hits in 1196 CRISPR screens"/>
</dbReference>
<dbReference type="ChiTaRS" id="UBR1">
    <property type="organism name" value="human"/>
</dbReference>
<dbReference type="EvolutionaryTrace" id="Q8IWV7"/>
<dbReference type="GeneWiki" id="UBR1"/>
<dbReference type="GenomeRNAi" id="197131"/>
<dbReference type="Pharos" id="Q8IWV7">
    <property type="development level" value="Tbio"/>
</dbReference>
<dbReference type="PRO" id="PR:Q8IWV7"/>
<dbReference type="Proteomes" id="UP000005640">
    <property type="component" value="Chromosome 15"/>
</dbReference>
<dbReference type="RNAct" id="Q8IWV7">
    <property type="molecule type" value="protein"/>
</dbReference>
<dbReference type="Bgee" id="ENSG00000159459">
    <property type="expression patterns" value="Expressed in epithelial cell of pancreas and 197 other cell types or tissues"/>
</dbReference>
<dbReference type="ExpressionAtlas" id="Q8IWV7">
    <property type="expression patterns" value="baseline and differential"/>
</dbReference>
<dbReference type="GO" id="GO:0005737">
    <property type="term" value="C:cytoplasm"/>
    <property type="evidence" value="ECO:0000318"/>
    <property type="project" value="GO_Central"/>
</dbReference>
<dbReference type="GO" id="GO:0005829">
    <property type="term" value="C:cytosol"/>
    <property type="evidence" value="ECO:0000314"/>
    <property type="project" value="UniProtKB"/>
</dbReference>
<dbReference type="GO" id="GO:0000502">
    <property type="term" value="C:proteasome complex"/>
    <property type="evidence" value="ECO:0007669"/>
    <property type="project" value="Ensembl"/>
</dbReference>
<dbReference type="GO" id="GO:0000151">
    <property type="term" value="C:ubiquitin ligase complex"/>
    <property type="evidence" value="ECO:0000318"/>
    <property type="project" value="GO_Central"/>
</dbReference>
<dbReference type="GO" id="GO:0070728">
    <property type="term" value="F:L-leucine binding"/>
    <property type="evidence" value="ECO:0000314"/>
    <property type="project" value="UniProtKB"/>
</dbReference>
<dbReference type="GO" id="GO:0061630">
    <property type="term" value="F:ubiquitin protein ligase activity"/>
    <property type="evidence" value="ECO:0000314"/>
    <property type="project" value="UniProtKB"/>
</dbReference>
<dbReference type="GO" id="GO:0008270">
    <property type="term" value="F:zinc ion binding"/>
    <property type="evidence" value="ECO:0007669"/>
    <property type="project" value="UniProtKB-KW"/>
</dbReference>
<dbReference type="GO" id="GO:0071233">
    <property type="term" value="P:cellular response to L-leucine"/>
    <property type="evidence" value="ECO:0000314"/>
    <property type="project" value="UniProtKB"/>
</dbReference>
<dbReference type="GO" id="GO:0032007">
    <property type="term" value="P:negative regulation of TOR signaling"/>
    <property type="evidence" value="ECO:0000315"/>
    <property type="project" value="UniProtKB"/>
</dbReference>
<dbReference type="GO" id="GO:0043161">
    <property type="term" value="P:proteasome-mediated ubiquitin-dependent protein catabolic process"/>
    <property type="evidence" value="ECO:0000314"/>
    <property type="project" value="UniProtKB"/>
</dbReference>
<dbReference type="GO" id="GO:0016567">
    <property type="term" value="P:protein ubiquitination"/>
    <property type="evidence" value="ECO:0000318"/>
    <property type="project" value="GO_Central"/>
</dbReference>
<dbReference type="GO" id="GO:0071596">
    <property type="term" value="P:ubiquitin-dependent protein catabolic process via the N-end rule pathway"/>
    <property type="evidence" value="ECO:0000314"/>
    <property type="project" value="UniProtKB"/>
</dbReference>
<dbReference type="CDD" id="cd16685">
    <property type="entry name" value="RING-H2_UBR1"/>
    <property type="match status" value="1"/>
</dbReference>
<dbReference type="CDD" id="cd19678">
    <property type="entry name" value="UBR-box_UBR1"/>
    <property type="match status" value="1"/>
</dbReference>
<dbReference type="FunFam" id="3.30.1390.10:FF:000005">
    <property type="entry name" value="E3 ubiquitin-protein ligase UBR1 isoform X2"/>
    <property type="match status" value="1"/>
</dbReference>
<dbReference type="FunFam" id="2.10.110.30:FF:000001">
    <property type="entry name" value="E3 ubiquitin-protein ligase UBR2 isoform 1"/>
    <property type="match status" value="1"/>
</dbReference>
<dbReference type="FunFam" id="1.10.10.2670:FF:000001">
    <property type="entry name" value="E3 ubiquitin-protein ligase UBR2 isoform X1"/>
    <property type="match status" value="1"/>
</dbReference>
<dbReference type="Gene3D" id="2.10.110.30">
    <property type="match status" value="1"/>
</dbReference>
<dbReference type="Gene3D" id="3.30.1390.10">
    <property type="match status" value="1"/>
</dbReference>
<dbReference type="Gene3D" id="1.10.10.2670">
    <property type="entry name" value="E3 ubiquitin-protein ligase"/>
    <property type="match status" value="1"/>
</dbReference>
<dbReference type="InterPro" id="IPR003769">
    <property type="entry name" value="ClpS_core"/>
</dbReference>
<dbReference type="InterPro" id="IPR042065">
    <property type="entry name" value="E3_ELL-like"/>
</dbReference>
<dbReference type="InterPro" id="IPR044046">
    <property type="entry name" value="E3_ligase_UBR-like_C"/>
</dbReference>
<dbReference type="InterPro" id="IPR014719">
    <property type="entry name" value="Ribosomal_bL12_C/ClpS-like"/>
</dbReference>
<dbReference type="InterPro" id="IPR047507">
    <property type="entry name" value="UBR-box_UBR1"/>
</dbReference>
<dbReference type="InterPro" id="IPR039164">
    <property type="entry name" value="UBR1-like"/>
</dbReference>
<dbReference type="InterPro" id="IPR055194">
    <property type="entry name" value="UBR1-like_winged-helix"/>
</dbReference>
<dbReference type="InterPro" id="IPR036390">
    <property type="entry name" value="WH_DNA-bd_sf"/>
</dbReference>
<dbReference type="InterPro" id="IPR003126">
    <property type="entry name" value="Znf_UBR"/>
</dbReference>
<dbReference type="PANTHER" id="PTHR21497:SF27">
    <property type="entry name" value="E3 UBIQUITIN-PROTEIN LIGASE UBR1"/>
    <property type="match status" value="1"/>
</dbReference>
<dbReference type="PANTHER" id="PTHR21497">
    <property type="entry name" value="UBIQUITIN LIGASE E3 ALPHA-RELATED"/>
    <property type="match status" value="1"/>
</dbReference>
<dbReference type="Pfam" id="PF02617">
    <property type="entry name" value="ClpS"/>
    <property type="match status" value="1"/>
</dbReference>
<dbReference type="Pfam" id="PF18995">
    <property type="entry name" value="PRT6_C"/>
    <property type="match status" value="1"/>
</dbReference>
<dbReference type="Pfam" id="PF22960">
    <property type="entry name" value="UBR1-like_wing"/>
    <property type="match status" value="1"/>
</dbReference>
<dbReference type="Pfam" id="PF02207">
    <property type="entry name" value="zf-UBR"/>
    <property type="match status" value="1"/>
</dbReference>
<dbReference type="SMART" id="SM00396">
    <property type="entry name" value="ZnF_UBR1"/>
    <property type="match status" value="1"/>
</dbReference>
<dbReference type="SUPFAM" id="SSF54736">
    <property type="entry name" value="ClpS-like"/>
    <property type="match status" value="1"/>
</dbReference>
<dbReference type="SUPFAM" id="SSF46785">
    <property type="entry name" value="Winged helix' DNA-binding domain"/>
    <property type="match status" value="1"/>
</dbReference>
<dbReference type="PROSITE" id="PS51157">
    <property type="entry name" value="ZF_UBR"/>
    <property type="match status" value="1"/>
</dbReference>
<proteinExistence type="evidence at protein level"/>